<gene>
    <name evidence="1" type="primary">pgl</name>
    <name type="ordered locus">BU293</name>
</gene>
<organism>
    <name type="scientific">Buchnera aphidicola subsp. Acyrthosiphon pisum (strain APS)</name>
    <name type="common">Acyrthosiphon pisum symbiotic bacterium</name>
    <dbReference type="NCBI Taxonomy" id="107806"/>
    <lineage>
        <taxon>Bacteria</taxon>
        <taxon>Pseudomonadati</taxon>
        <taxon>Pseudomonadota</taxon>
        <taxon>Gammaproteobacteria</taxon>
        <taxon>Enterobacterales</taxon>
        <taxon>Erwiniaceae</taxon>
        <taxon>Buchnera</taxon>
    </lineage>
</organism>
<protein>
    <recommendedName>
        <fullName evidence="1">6-phosphogluconolactonase</fullName>
        <shortName evidence="1">6-P-gluconolactonase</shortName>
        <ecNumber evidence="1">3.1.1.31</ecNumber>
    </recommendedName>
</protein>
<comment type="function">
    <text evidence="1">Catalyzes the hydrolysis of 6-phosphogluconolactone to 6-phosphogluconate.</text>
</comment>
<comment type="catalytic activity">
    <reaction evidence="1">
        <text>6-phospho-D-glucono-1,5-lactone + H2O = 6-phospho-D-gluconate + H(+)</text>
        <dbReference type="Rhea" id="RHEA:12556"/>
        <dbReference type="ChEBI" id="CHEBI:15377"/>
        <dbReference type="ChEBI" id="CHEBI:15378"/>
        <dbReference type="ChEBI" id="CHEBI:57955"/>
        <dbReference type="ChEBI" id="CHEBI:58759"/>
        <dbReference type="EC" id="3.1.1.31"/>
    </reaction>
</comment>
<comment type="pathway">
    <text evidence="1">Carbohydrate degradation; pentose phosphate pathway; D-ribulose 5-phosphate from D-glucose 6-phosphate (oxidative stage): step 2/3.</text>
</comment>
<comment type="similarity">
    <text evidence="1">Belongs to the cycloisomerase 2 family.</text>
</comment>
<feature type="chain" id="PRO_0000171128" description="6-phosphogluconolactonase">
    <location>
        <begin position="1"/>
        <end position="334"/>
    </location>
</feature>
<name>6PGL_BUCAI</name>
<proteinExistence type="inferred from homology"/>
<accession>P57380</accession>
<keyword id="KW-0119">Carbohydrate metabolism</keyword>
<keyword id="KW-0313">Glucose metabolism</keyword>
<keyword id="KW-0378">Hydrolase</keyword>
<keyword id="KW-1185">Reference proteome</keyword>
<reference key="1">
    <citation type="journal article" date="2000" name="Nature">
        <title>Genome sequence of the endocellular bacterial symbiont of aphids Buchnera sp. APS.</title>
        <authorList>
            <person name="Shigenobu S."/>
            <person name="Watanabe H."/>
            <person name="Hattori M."/>
            <person name="Sakaki Y."/>
            <person name="Ishikawa H."/>
        </authorList>
    </citation>
    <scope>NUCLEOTIDE SEQUENCE [LARGE SCALE GENOMIC DNA]</scope>
    <source>
        <strain>APS</strain>
    </source>
</reference>
<dbReference type="EC" id="3.1.1.31" evidence="1"/>
<dbReference type="EMBL" id="BA000003">
    <property type="protein sequence ID" value="BAB13003.1"/>
    <property type="molecule type" value="Genomic_DNA"/>
</dbReference>
<dbReference type="RefSeq" id="NP_240117.1">
    <property type="nucleotide sequence ID" value="NC_002528.1"/>
</dbReference>
<dbReference type="RefSeq" id="WP_010896052.1">
    <property type="nucleotide sequence ID" value="NC_002528.1"/>
</dbReference>
<dbReference type="SMR" id="P57380"/>
<dbReference type="STRING" id="563178.BUAP5A_288"/>
<dbReference type="EnsemblBacteria" id="BAB13003">
    <property type="protein sequence ID" value="BAB13003"/>
    <property type="gene ID" value="BAB13003"/>
</dbReference>
<dbReference type="KEGG" id="buc:BU293"/>
<dbReference type="PATRIC" id="fig|107806.10.peg.303"/>
<dbReference type="eggNOG" id="COG2706">
    <property type="taxonomic scope" value="Bacteria"/>
</dbReference>
<dbReference type="HOGENOM" id="CLU_038716_2_0_6"/>
<dbReference type="UniPathway" id="UPA00115">
    <property type="reaction ID" value="UER00409"/>
</dbReference>
<dbReference type="Proteomes" id="UP000001806">
    <property type="component" value="Chromosome"/>
</dbReference>
<dbReference type="GO" id="GO:0005829">
    <property type="term" value="C:cytosol"/>
    <property type="evidence" value="ECO:0007669"/>
    <property type="project" value="TreeGrafter"/>
</dbReference>
<dbReference type="GO" id="GO:0017057">
    <property type="term" value="F:6-phosphogluconolactonase activity"/>
    <property type="evidence" value="ECO:0007669"/>
    <property type="project" value="UniProtKB-UniRule"/>
</dbReference>
<dbReference type="GO" id="GO:0006006">
    <property type="term" value="P:glucose metabolic process"/>
    <property type="evidence" value="ECO:0007669"/>
    <property type="project" value="UniProtKB-KW"/>
</dbReference>
<dbReference type="GO" id="GO:0009051">
    <property type="term" value="P:pentose-phosphate shunt, oxidative branch"/>
    <property type="evidence" value="ECO:0007669"/>
    <property type="project" value="UniProtKB-UniRule"/>
</dbReference>
<dbReference type="Gene3D" id="2.130.10.10">
    <property type="entry name" value="YVTN repeat-like/Quinoprotein amine dehydrogenase"/>
    <property type="match status" value="1"/>
</dbReference>
<dbReference type="HAMAP" id="MF_01605">
    <property type="entry name" value="6P_gluconolactonase"/>
    <property type="match status" value="1"/>
</dbReference>
<dbReference type="InterPro" id="IPR022528">
    <property type="entry name" value="6-phosphogluconolactonase_YbhE"/>
</dbReference>
<dbReference type="InterPro" id="IPR050282">
    <property type="entry name" value="Cycloisomerase_2"/>
</dbReference>
<dbReference type="InterPro" id="IPR019405">
    <property type="entry name" value="Lactonase_7-beta_prop"/>
</dbReference>
<dbReference type="InterPro" id="IPR015943">
    <property type="entry name" value="WD40/YVTN_repeat-like_dom_sf"/>
</dbReference>
<dbReference type="NCBIfam" id="NF008258">
    <property type="entry name" value="PRK11028.1"/>
    <property type="match status" value="1"/>
</dbReference>
<dbReference type="PANTHER" id="PTHR30344:SF1">
    <property type="entry name" value="6-PHOSPHOGLUCONOLACTONASE"/>
    <property type="match status" value="1"/>
</dbReference>
<dbReference type="PANTHER" id="PTHR30344">
    <property type="entry name" value="6-PHOSPHOGLUCONOLACTONASE-RELATED"/>
    <property type="match status" value="1"/>
</dbReference>
<dbReference type="Pfam" id="PF10282">
    <property type="entry name" value="Lactonase"/>
    <property type="match status" value="1"/>
</dbReference>
<dbReference type="SUPFAM" id="SSF101908">
    <property type="entry name" value="Putative isomerase YbhE"/>
    <property type="match status" value="1"/>
</dbReference>
<sequence length="334" mass="38947">MKQVVYIANSESKNIEVWNLCKSGKMNLIQKIETDGKIQPINIIQKRNLLYAGIFPDNKIITYSINHNGFLEKKNESNIPGKANYISFDKKKEFLFCSSYHSNFISVSPLNKFGIPQNPIQIIYNIEGCHAAKMNYKYNILFVISLKEDCIYLYYLTDFGILKSTEQNILHTQKKSGPRHIIFHPNQDFIYTINELNGTIDVWKIYKKNNVIKVKNIQNIHVLKNRFLKDYWCSDIHITSCGRFLYACDRFFNIISLFHINQNDNKLVFFKSYDTEEQPRSFNINSHNTHLIVAGEKSNTFIIYSISNSTGELKKINVYSTGQRPVWILIHALC</sequence>
<evidence type="ECO:0000255" key="1">
    <source>
        <dbReference type="HAMAP-Rule" id="MF_01605"/>
    </source>
</evidence>